<feature type="chain" id="PRO_0000120276" description="Probable Brix domain-containing ribosomal biogenesis protein">
    <location>
        <begin position="1"/>
        <end position="181"/>
    </location>
</feature>
<feature type="domain" description="Brix" evidence="1">
    <location>
        <begin position="5"/>
        <end position="181"/>
    </location>
</feature>
<proteinExistence type="inferred from homology"/>
<organism>
    <name type="scientific">Pyrobaculum aerophilum (strain ATCC 51768 / DSM 7523 / JCM 9630 / CIP 104966 / NBRC 100827 / IM2)</name>
    <dbReference type="NCBI Taxonomy" id="178306"/>
    <lineage>
        <taxon>Archaea</taxon>
        <taxon>Thermoproteota</taxon>
        <taxon>Thermoprotei</taxon>
        <taxon>Thermoproteales</taxon>
        <taxon>Thermoproteaceae</taxon>
        <taxon>Pyrobaculum</taxon>
    </lineage>
</organism>
<accession>Q8ZVN2</accession>
<name>BRIX_PYRAE</name>
<evidence type="ECO:0000255" key="1">
    <source>
        <dbReference type="HAMAP-Rule" id="MF_00699"/>
    </source>
</evidence>
<reference key="1">
    <citation type="journal article" date="2002" name="Proc. Natl. Acad. Sci. U.S.A.">
        <title>Genome sequence of the hyperthermophilic crenarchaeon Pyrobaculum aerophilum.</title>
        <authorList>
            <person name="Fitz-Gibbon S.T."/>
            <person name="Ladner H."/>
            <person name="Kim U.-J."/>
            <person name="Stetter K.O."/>
            <person name="Simon M.I."/>
            <person name="Miller J.H."/>
        </authorList>
    </citation>
    <scope>NUCLEOTIDE SEQUENCE [LARGE SCALE GENOMIC DNA]</scope>
    <source>
        <strain>ATCC 51768 / DSM 7523 / JCM 9630 / CIP 104966 / NBRC 100827 / IM2</strain>
    </source>
</reference>
<comment type="function">
    <text evidence="1">Probably involved in the biogenesis of the ribosome.</text>
</comment>
<keyword id="KW-1185">Reference proteome</keyword>
<keyword id="KW-0690">Ribosome biogenesis</keyword>
<sequence>MEGGCKVIITTSREPSKKTLELVNDLVNSLPGTSKIVRGKKSFITLLEEAVACGARYIAFIWERRGMPFALLFYDVINREWKPYMLKISGIKTRREFPVFISRRPPAKSAVIVDLSEGEVGDIFTEIFGYPILYSLDAVRGLFDTVVLIRRTDGYLVELLGSDLGPRASSIRIKKVVYRHV</sequence>
<protein>
    <recommendedName>
        <fullName evidence="1">Probable Brix domain-containing ribosomal biogenesis protein</fullName>
    </recommendedName>
</protein>
<dbReference type="EMBL" id="AE009441">
    <property type="protein sequence ID" value="AAL64024.1"/>
    <property type="molecule type" value="Genomic_DNA"/>
</dbReference>
<dbReference type="RefSeq" id="WP_011008492.1">
    <property type="nucleotide sequence ID" value="NC_003364.1"/>
</dbReference>
<dbReference type="SMR" id="Q8ZVN2"/>
<dbReference type="STRING" id="178306.PAE2201"/>
<dbReference type="EnsemblBacteria" id="AAL64024">
    <property type="protein sequence ID" value="AAL64024"/>
    <property type="gene ID" value="PAE2201"/>
</dbReference>
<dbReference type="GeneID" id="1464358"/>
<dbReference type="KEGG" id="pai:PAE2201"/>
<dbReference type="PATRIC" id="fig|178306.9.peg.1635"/>
<dbReference type="eggNOG" id="arCOG03247">
    <property type="taxonomic scope" value="Archaea"/>
</dbReference>
<dbReference type="HOGENOM" id="CLU_1444746_0_0_2"/>
<dbReference type="InParanoid" id="Q8ZVN2"/>
<dbReference type="Proteomes" id="UP000002439">
    <property type="component" value="Chromosome"/>
</dbReference>
<dbReference type="GO" id="GO:0019843">
    <property type="term" value="F:rRNA binding"/>
    <property type="evidence" value="ECO:0007669"/>
    <property type="project" value="InterPro"/>
</dbReference>
<dbReference type="GO" id="GO:0006364">
    <property type="term" value="P:rRNA processing"/>
    <property type="evidence" value="ECO:0007669"/>
    <property type="project" value="InterPro"/>
</dbReference>
<dbReference type="Gene3D" id="3.40.50.10480">
    <property type="entry name" value="Probable brix-domain ribosomal biogenesis protein"/>
    <property type="match status" value="1"/>
</dbReference>
<dbReference type="HAMAP" id="MF_00699">
    <property type="entry name" value="BriX"/>
    <property type="match status" value="1"/>
</dbReference>
<dbReference type="InterPro" id="IPR007109">
    <property type="entry name" value="Brix"/>
</dbReference>
<dbReference type="InterPro" id="IPR023548">
    <property type="entry name" value="Brix_dom_Rbsml_bgen_prot"/>
</dbReference>
<dbReference type="SMART" id="SM00879">
    <property type="entry name" value="Brix"/>
    <property type="match status" value="1"/>
</dbReference>
<dbReference type="SUPFAM" id="SSF52954">
    <property type="entry name" value="Class II aaRS ABD-related"/>
    <property type="match status" value="1"/>
</dbReference>
<dbReference type="PROSITE" id="PS50833">
    <property type="entry name" value="BRIX"/>
    <property type="match status" value="1"/>
</dbReference>
<gene>
    <name type="ordered locus">PAE2201</name>
</gene>